<organism>
    <name type="scientific">Xylella fastidiosa (strain Temecula1 / ATCC 700964)</name>
    <dbReference type="NCBI Taxonomy" id="183190"/>
    <lineage>
        <taxon>Bacteria</taxon>
        <taxon>Pseudomonadati</taxon>
        <taxon>Pseudomonadota</taxon>
        <taxon>Gammaproteobacteria</taxon>
        <taxon>Lysobacterales</taxon>
        <taxon>Lysobacteraceae</taxon>
        <taxon>Xylella</taxon>
    </lineage>
</organism>
<gene>
    <name type="ordered locus">PD_1586</name>
</gene>
<feature type="chain" id="PRO_0000167395" description="UPF0102 protein PD_1586">
    <location>
        <begin position="1"/>
        <end position="121"/>
    </location>
</feature>
<name>Y1586_XYLFT</name>
<protein>
    <recommendedName>
        <fullName evidence="1">UPF0102 protein PD_1586</fullName>
    </recommendedName>
</protein>
<sequence>MLNRRDCGAAVEVAARRHLERAGLRWLASNVCFRGGELDLVMYDVMSVVFVEVRYRQQESHGSAAQSVDRRKRRKLVMAAQLFLQRHPFLAQVPCRFDVVEGAGRPLQLHWIRDAFRLDDC</sequence>
<keyword id="KW-1185">Reference proteome</keyword>
<evidence type="ECO:0000255" key="1">
    <source>
        <dbReference type="HAMAP-Rule" id="MF_00048"/>
    </source>
</evidence>
<comment type="similarity">
    <text evidence="1">Belongs to the UPF0102 family.</text>
</comment>
<proteinExistence type="inferred from homology"/>
<accession>Q87B72</accession>
<dbReference type="EMBL" id="AE009442">
    <property type="protein sequence ID" value="AAO29428.1"/>
    <property type="molecule type" value="Genomic_DNA"/>
</dbReference>
<dbReference type="RefSeq" id="WP_004083551.1">
    <property type="nucleotide sequence ID" value="NC_004556.1"/>
</dbReference>
<dbReference type="SMR" id="Q87B72"/>
<dbReference type="KEGG" id="xft:PD_1586"/>
<dbReference type="HOGENOM" id="CLU_115353_1_0_6"/>
<dbReference type="Proteomes" id="UP000002516">
    <property type="component" value="Chromosome"/>
</dbReference>
<dbReference type="GO" id="GO:0003676">
    <property type="term" value="F:nucleic acid binding"/>
    <property type="evidence" value="ECO:0007669"/>
    <property type="project" value="InterPro"/>
</dbReference>
<dbReference type="Gene3D" id="3.40.1350.10">
    <property type="match status" value="1"/>
</dbReference>
<dbReference type="HAMAP" id="MF_00048">
    <property type="entry name" value="UPF0102"/>
    <property type="match status" value="1"/>
</dbReference>
<dbReference type="InterPro" id="IPR011335">
    <property type="entry name" value="Restrct_endonuc-II-like"/>
</dbReference>
<dbReference type="InterPro" id="IPR011856">
    <property type="entry name" value="tRNA_endonuc-like_dom_sf"/>
</dbReference>
<dbReference type="InterPro" id="IPR003509">
    <property type="entry name" value="UPF0102_YraN-like"/>
</dbReference>
<dbReference type="NCBIfam" id="NF009150">
    <property type="entry name" value="PRK12497.1-3"/>
    <property type="match status" value="1"/>
</dbReference>
<dbReference type="NCBIfam" id="TIGR00252">
    <property type="entry name" value="YraN family protein"/>
    <property type="match status" value="1"/>
</dbReference>
<dbReference type="PANTHER" id="PTHR34039">
    <property type="entry name" value="UPF0102 PROTEIN YRAN"/>
    <property type="match status" value="1"/>
</dbReference>
<dbReference type="PANTHER" id="PTHR34039:SF1">
    <property type="entry name" value="UPF0102 PROTEIN YRAN"/>
    <property type="match status" value="1"/>
</dbReference>
<dbReference type="Pfam" id="PF02021">
    <property type="entry name" value="UPF0102"/>
    <property type="match status" value="1"/>
</dbReference>
<dbReference type="SUPFAM" id="SSF52980">
    <property type="entry name" value="Restriction endonuclease-like"/>
    <property type="match status" value="1"/>
</dbReference>
<reference key="1">
    <citation type="journal article" date="2003" name="J. Bacteriol.">
        <title>Comparative analyses of the complete genome sequences of Pierce's disease and citrus variegated chlorosis strains of Xylella fastidiosa.</title>
        <authorList>
            <person name="Van Sluys M.A."/>
            <person name="de Oliveira M.C."/>
            <person name="Monteiro-Vitorello C.B."/>
            <person name="Miyaki C.Y."/>
            <person name="Furlan L.R."/>
            <person name="Camargo L.E.A."/>
            <person name="da Silva A.C.R."/>
            <person name="Moon D.H."/>
            <person name="Takita M.A."/>
            <person name="Lemos E.G.M."/>
            <person name="Machado M.A."/>
            <person name="Ferro M.I.T."/>
            <person name="da Silva F.R."/>
            <person name="Goldman M.H.S."/>
            <person name="Goldman G.H."/>
            <person name="Lemos M.V.F."/>
            <person name="El-Dorry H."/>
            <person name="Tsai S.M."/>
            <person name="Carrer H."/>
            <person name="Carraro D.M."/>
            <person name="de Oliveira R.C."/>
            <person name="Nunes L.R."/>
            <person name="Siqueira W.J."/>
            <person name="Coutinho L.L."/>
            <person name="Kimura E.T."/>
            <person name="Ferro E.S."/>
            <person name="Harakava R."/>
            <person name="Kuramae E.E."/>
            <person name="Marino C.L."/>
            <person name="Giglioti E."/>
            <person name="Abreu I.L."/>
            <person name="Alves L.M.C."/>
            <person name="do Amaral A.M."/>
            <person name="Baia G.S."/>
            <person name="Blanco S.R."/>
            <person name="Brito M.S."/>
            <person name="Cannavan F.S."/>
            <person name="Celestino A.V."/>
            <person name="da Cunha A.F."/>
            <person name="Fenille R.C."/>
            <person name="Ferro J.A."/>
            <person name="Formighieri E.F."/>
            <person name="Kishi L.T."/>
            <person name="Leoni S.G."/>
            <person name="Oliveira A.R."/>
            <person name="Rosa V.E. Jr."/>
            <person name="Sassaki F.T."/>
            <person name="Sena J.A.D."/>
            <person name="de Souza A.A."/>
            <person name="Truffi D."/>
            <person name="Tsukumo F."/>
            <person name="Yanai G.M."/>
            <person name="Zaros L.G."/>
            <person name="Civerolo E.L."/>
            <person name="Simpson A.J.G."/>
            <person name="Almeida N.F. Jr."/>
            <person name="Setubal J.C."/>
            <person name="Kitajima J.P."/>
        </authorList>
    </citation>
    <scope>NUCLEOTIDE SEQUENCE [LARGE SCALE GENOMIC DNA]</scope>
    <source>
        <strain>Temecula1 / ATCC 700964</strain>
    </source>
</reference>